<feature type="chain" id="PRO_0000093476" description="Cytotoxin 1" evidence="2">
    <location>
        <begin position="1"/>
        <end position="61"/>
    </location>
</feature>
<feature type="disulfide bond" evidence="1">
    <location>
        <begin position="3"/>
        <end position="22"/>
    </location>
</feature>
<feature type="disulfide bond" evidence="1">
    <location>
        <begin position="15"/>
        <end position="39"/>
    </location>
</feature>
<feature type="disulfide bond" evidence="1">
    <location>
        <begin position="43"/>
        <end position="54"/>
    </location>
</feature>
<feature type="disulfide bond" evidence="1">
    <location>
        <begin position="55"/>
        <end position="60"/>
    </location>
</feature>
<sequence>LKCHNKLVPFLSKTCPEGKNLCYKMTMLKMPKIPIKRGCTDACPKSSLLVKVVCCNKDKCN</sequence>
<accession>P01471</accession>
<name>3SB1_HEMHA</name>
<protein>
    <recommendedName>
        <fullName>Cytotoxin 1</fullName>
    </recommendedName>
    <alternativeName>
        <fullName evidence="3">Hemolytic protein 12B</fullName>
    </alternativeName>
</protein>
<evidence type="ECO:0000250" key="1">
    <source>
        <dbReference type="UniProtKB" id="P60301"/>
    </source>
</evidence>
<evidence type="ECO:0000269" key="2">
    <source>
    </source>
</evidence>
<evidence type="ECO:0000303" key="3">
    <source>
    </source>
</evidence>
<evidence type="ECO:0000305" key="4"/>
<keyword id="KW-0123">Cardiotoxin</keyword>
<keyword id="KW-0204">Cytolysis</keyword>
<keyword id="KW-0903">Direct protein sequencing</keyword>
<keyword id="KW-1015">Disulfide bond</keyword>
<keyword id="KW-0354">Hemolysis</keyword>
<keyword id="KW-0382">Hypotensive agent</keyword>
<keyword id="KW-0964">Secreted</keyword>
<keyword id="KW-0800">Toxin</keyword>
<proteinExistence type="evidence at protein level"/>
<organism>
    <name type="scientific">Hemachatus haemachatus</name>
    <name type="common">Rinkhals</name>
    <name type="synonym">Sepedon haemachatus</name>
    <dbReference type="NCBI Taxonomy" id="8626"/>
    <lineage>
        <taxon>Eukaryota</taxon>
        <taxon>Metazoa</taxon>
        <taxon>Chordata</taxon>
        <taxon>Craniata</taxon>
        <taxon>Vertebrata</taxon>
        <taxon>Euteleostomi</taxon>
        <taxon>Lepidosauria</taxon>
        <taxon>Squamata</taxon>
        <taxon>Bifurcata</taxon>
        <taxon>Unidentata</taxon>
        <taxon>Episquamata</taxon>
        <taxon>Toxicofera</taxon>
        <taxon>Serpentes</taxon>
        <taxon>Colubroidea</taxon>
        <taxon>Elapidae</taxon>
        <taxon>Elapinae</taxon>
        <taxon>Hemachatus</taxon>
    </lineage>
</organism>
<comment type="function">
    <text evidence="3">This protein lyses red blood cells and has cardiotoxic and hypotensive activities.</text>
</comment>
<comment type="subcellular location">
    <subcellularLocation>
        <location evidence="2">Secreted</location>
    </subcellularLocation>
</comment>
<comment type="tissue specificity">
    <text evidence="4">Expressed by the venom gland.</text>
</comment>
<comment type="miscellaneous">
    <text evidence="4">Is classified as a P-type cytotoxin, since a proline residue stands at position 31 (Pro-31 in standard classification).</text>
</comment>
<comment type="similarity">
    <text evidence="4">Belongs to the three-finger toxin family. Short-chain subfamily. Type IB cytotoxin sub-subfamily.</text>
</comment>
<reference key="1">
    <citation type="journal article" date="1973" name="Biochemistry">
        <title>Complete amino acid sequence of a nonneurotoxic hemolytic protein from the venom of Haemachatus haemachates (African ringhals cobra).</title>
        <authorList>
            <person name="Fryklund L."/>
            <person name="Eaker D."/>
        </authorList>
    </citation>
    <scope>PROTEIN SEQUENCE</scope>
    <scope>SUBCELLULAR LOCATION</scope>
    <source>
        <tissue>Venom</tissue>
    </source>
</reference>
<dbReference type="PIR" id="A01731">
    <property type="entry name" value="H3RI1L"/>
</dbReference>
<dbReference type="BMRB" id="P01471"/>
<dbReference type="SMR" id="P01471"/>
<dbReference type="GO" id="GO:0005576">
    <property type="term" value="C:extracellular region"/>
    <property type="evidence" value="ECO:0007669"/>
    <property type="project" value="UniProtKB-SubCell"/>
</dbReference>
<dbReference type="GO" id="GO:0090729">
    <property type="term" value="F:toxin activity"/>
    <property type="evidence" value="ECO:0007669"/>
    <property type="project" value="UniProtKB-KW"/>
</dbReference>
<dbReference type="GO" id="GO:0031640">
    <property type="term" value="P:killing of cells of another organism"/>
    <property type="evidence" value="ECO:0007669"/>
    <property type="project" value="UniProtKB-KW"/>
</dbReference>
<dbReference type="GO" id="GO:0008217">
    <property type="term" value="P:regulation of blood pressure"/>
    <property type="evidence" value="ECO:0007669"/>
    <property type="project" value="UniProtKB-KW"/>
</dbReference>
<dbReference type="CDD" id="cd00206">
    <property type="entry name" value="TFP_snake_toxin"/>
    <property type="match status" value="1"/>
</dbReference>
<dbReference type="FunFam" id="2.10.60.10:FF:000024">
    <property type="entry name" value="Cytotoxin 1"/>
    <property type="match status" value="1"/>
</dbReference>
<dbReference type="Gene3D" id="2.10.60.10">
    <property type="entry name" value="CD59"/>
    <property type="match status" value="1"/>
</dbReference>
<dbReference type="InterPro" id="IPR003572">
    <property type="entry name" value="Cytotoxin_Cobra"/>
</dbReference>
<dbReference type="InterPro" id="IPR003571">
    <property type="entry name" value="Snake_3FTx"/>
</dbReference>
<dbReference type="InterPro" id="IPR045860">
    <property type="entry name" value="Snake_toxin-like_sf"/>
</dbReference>
<dbReference type="InterPro" id="IPR018354">
    <property type="entry name" value="Snake_toxin_con_site"/>
</dbReference>
<dbReference type="InterPro" id="IPR054131">
    <property type="entry name" value="Toxin_cobra-type"/>
</dbReference>
<dbReference type="Pfam" id="PF21947">
    <property type="entry name" value="Toxin_cobra-type"/>
    <property type="match status" value="1"/>
</dbReference>
<dbReference type="PRINTS" id="PR00282">
    <property type="entry name" value="CYTOTOXIN"/>
</dbReference>
<dbReference type="SUPFAM" id="SSF57302">
    <property type="entry name" value="Snake toxin-like"/>
    <property type="match status" value="1"/>
</dbReference>
<dbReference type="PROSITE" id="PS00272">
    <property type="entry name" value="SNAKE_TOXIN"/>
    <property type="match status" value="1"/>
</dbReference>